<gene>
    <name evidence="1" type="primary">nusB</name>
    <name type="ordered locus">Adeh_2738</name>
</gene>
<feature type="chain" id="PRO_0000265479" description="Transcription antitermination protein NusB">
    <location>
        <begin position="1"/>
        <end position="142"/>
    </location>
</feature>
<proteinExistence type="inferred from homology"/>
<reference key="1">
    <citation type="submission" date="2006-01" db="EMBL/GenBank/DDBJ databases">
        <title>Complete sequence of Anaeromyxobacter dehalogenans 2CP-C.</title>
        <authorList>
            <person name="Copeland A."/>
            <person name="Lucas S."/>
            <person name="Lapidus A."/>
            <person name="Barry K."/>
            <person name="Detter J.C."/>
            <person name="Glavina T."/>
            <person name="Hammon N."/>
            <person name="Israni S."/>
            <person name="Pitluck S."/>
            <person name="Brettin T."/>
            <person name="Bruce D."/>
            <person name="Han C."/>
            <person name="Tapia R."/>
            <person name="Gilna P."/>
            <person name="Kiss H."/>
            <person name="Schmutz J."/>
            <person name="Larimer F."/>
            <person name="Land M."/>
            <person name="Kyrpides N."/>
            <person name="Anderson I."/>
            <person name="Sanford R.A."/>
            <person name="Ritalahti K.M."/>
            <person name="Thomas H.S."/>
            <person name="Kirby J.R."/>
            <person name="Zhulin I.B."/>
            <person name="Loeffler F.E."/>
            <person name="Richardson P."/>
        </authorList>
    </citation>
    <scope>NUCLEOTIDE SEQUENCE [LARGE SCALE GENOMIC DNA]</scope>
    <source>
        <strain>2CP-C</strain>
    </source>
</reference>
<protein>
    <recommendedName>
        <fullName evidence="1">Transcription antitermination protein NusB</fullName>
    </recommendedName>
    <alternativeName>
        <fullName evidence="1">Antitermination factor NusB</fullName>
    </alternativeName>
</protein>
<organism>
    <name type="scientific">Anaeromyxobacter dehalogenans (strain 2CP-C)</name>
    <dbReference type="NCBI Taxonomy" id="290397"/>
    <lineage>
        <taxon>Bacteria</taxon>
        <taxon>Pseudomonadati</taxon>
        <taxon>Myxococcota</taxon>
        <taxon>Myxococcia</taxon>
        <taxon>Myxococcales</taxon>
        <taxon>Cystobacterineae</taxon>
        <taxon>Anaeromyxobacteraceae</taxon>
        <taxon>Anaeromyxobacter</taxon>
    </lineage>
</organism>
<accession>Q2ILH8</accession>
<comment type="function">
    <text evidence="1">Involved in transcription antitermination. Required for transcription of ribosomal RNA (rRNA) genes. Binds specifically to the boxA antiterminator sequence of the ribosomal RNA (rrn) operons.</text>
</comment>
<comment type="similarity">
    <text evidence="1">Belongs to the NusB family.</text>
</comment>
<dbReference type="EMBL" id="CP000251">
    <property type="protein sequence ID" value="ABC82508.1"/>
    <property type="molecule type" value="Genomic_DNA"/>
</dbReference>
<dbReference type="RefSeq" id="WP_011421790.1">
    <property type="nucleotide sequence ID" value="NC_007760.1"/>
</dbReference>
<dbReference type="SMR" id="Q2ILH8"/>
<dbReference type="STRING" id="290397.Adeh_2738"/>
<dbReference type="KEGG" id="ade:Adeh_2738"/>
<dbReference type="eggNOG" id="COG0781">
    <property type="taxonomic scope" value="Bacteria"/>
</dbReference>
<dbReference type="HOGENOM" id="CLU_087843_3_3_7"/>
<dbReference type="OrthoDB" id="9797817at2"/>
<dbReference type="Proteomes" id="UP000001935">
    <property type="component" value="Chromosome"/>
</dbReference>
<dbReference type="GO" id="GO:0005829">
    <property type="term" value="C:cytosol"/>
    <property type="evidence" value="ECO:0007669"/>
    <property type="project" value="TreeGrafter"/>
</dbReference>
<dbReference type="GO" id="GO:0003723">
    <property type="term" value="F:RNA binding"/>
    <property type="evidence" value="ECO:0007669"/>
    <property type="project" value="UniProtKB-UniRule"/>
</dbReference>
<dbReference type="GO" id="GO:0006353">
    <property type="term" value="P:DNA-templated transcription termination"/>
    <property type="evidence" value="ECO:0007669"/>
    <property type="project" value="UniProtKB-UniRule"/>
</dbReference>
<dbReference type="GO" id="GO:0031564">
    <property type="term" value="P:transcription antitermination"/>
    <property type="evidence" value="ECO:0007669"/>
    <property type="project" value="UniProtKB-KW"/>
</dbReference>
<dbReference type="CDD" id="cd00619">
    <property type="entry name" value="Terminator_NusB"/>
    <property type="match status" value="1"/>
</dbReference>
<dbReference type="Gene3D" id="1.10.940.10">
    <property type="entry name" value="NusB-like"/>
    <property type="match status" value="1"/>
</dbReference>
<dbReference type="HAMAP" id="MF_00073">
    <property type="entry name" value="NusB"/>
    <property type="match status" value="1"/>
</dbReference>
<dbReference type="InterPro" id="IPR035926">
    <property type="entry name" value="NusB-like_sf"/>
</dbReference>
<dbReference type="InterPro" id="IPR011605">
    <property type="entry name" value="NusB_fam"/>
</dbReference>
<dbReference type="InterPro" id="IPR006027">
    <property type="entry name" value="NusB_RsmB_TIM44"/>
</dbReference>
<dbReference type="NCBIfam" id="TIGR01951">
    <property type="entry name" value="nusB"/>
    <property type="match status" value="1"/>
</dbReference>
<dbReference type="PANTHER" id="PTHR11078:SF3">
    <property type="entry name" value="ANTITERMINATION NUSB DOMAIN-CONTAINING PROTEIN"/>
    <property type="match status" value="1"/>
</dbReference>
<dbReference type="PANTHER" id="PTHR11078">
    <property type="entry name" value="N UTILIZATION SUBSTANCE PROTEIN B-RELATED"/>
    <property type="match status" value="1"/>
</dbReference>
<dbReference type="Pfam" id="PF01029">
    <property type="entry name" value="NusB"/>
    <property type="match status" value="1"/>
</dbReference>
<dbReference type="SUPFAM" id="SSF48013">
    <property type="entry name" value="NusB-like"/>
    <property type="match status" value="1"/>
</dbReference>
<keyword id="KW-1185">Reference proteome</keyword>
<keyword id="KW-0694">RNA-binding</keyword>
<keyword id="KW-0804">Transcription</keyword>
<keyword id="KW-0889">Transcription antitermination</keyword>
<keyword id="KW-0805">Transcription regulation</keyword>
<sequence>MTSRRTRARERALQALYQIDVAAEGIDDALSRFWKSFEPVEREVMDLAEGLVRGVAQHRRAVDEAIEAVSTNWRLDRMAKVDRNVLRLAVFELLRTDVPVKVVINEAIELGKKYGSESSGAFVNGVLDKVASGLPPARRGER</sequence>
<evidence type="ECO:0000255" key="1">
    <source>
        <dbReference type="HAMAP-Rule" id="MF_00073"/>
    </source>
</evidence>
<name>NUSB_ANADE</name>